<sequence length="94" mass="10474">MTDAVGSIDMPDAQDEAPDSKKSRKGGKRGKKGPLKRLALFYRQIVAELRKVVWPSRNQLTTYTTVVIIFVVIMIGLVTLIDYGFSHAAKYVFG</sequence>
<accession>P0A4G8</accession>
<accession>P50055</accession>
<accession>Q9L0L4</accession>
<gene>
    <name evidence="1" type="primary">secE</name>
    <name type="ordered locus">SCO4646</name>
    <name type="ORF">SCD82.17</name>
</gene>
<protein>
    <recommendedName>
        <fullName evidence="1">Protein translocase subunit SecE</fullName>
    </recommendedName>
</protein>
<feature type="chain" id="PRO_0000104183" description="Protein translocase subunit SecE">
    <location>
        <begin position="1"/>
        <end position="94"/>
    </location>
</feature>
<feature type="transmembrane region" description="Helical" evidence="1">
    <location>
        <begin position="65"/>
        <end position="85"/>
    </location>
</feature>
<feature type="region of interest" description="Disordered" evidence="2">
    <location>
        <begin position="1"/>
        <end position="32"/>
    </location>
</feature>
<feature type="compositionally biased region" description="Basic residues" evidence="2">
    <location>
        <begin position="22"/>
        <end position="32"/>
    </location>
</feature>
<feature type="sequence conflict" description="In Ref. 1; BAA06984." evidence="3" ref="1">
    <original>EL</original>
    <variation>DV</variation>
    <location>
        <begin position="48"/>
        <end position="49"/>
    </location>
</feature>
<proteinExistence type="inferred from homology"/>
<keyword id="KW-1003">Cell membrane</keyword>
<keyword id="KW-0472">Membrane</keyword>
<keyword id="KW-0653">Protein transport</keyword>
<keyword id="KW-1185">Reference proteome</keyword>
<keyword id="KW-0811">Translocation</keyword>
<keyword id="KW-0812">Transmembrane</keyword>
<keyword id="KW-1133">Transmembrane helix</keyword>
<keyword id="KW-0813">Transport</keyword>
<organism>
    <name type="scientific">Streptomyces coelicolor (strain ATCC BAA-471 / A3(2) / M145)</name>
    <dbReference type="NCBI Taxonomy" id="100226"/>
    <lineage>
        <taxon>Bacteria</taxon>
        <taxon>Bacillati</taxon>
        <taxon>Actinomycetota</taxon>
        <taxon>Actinomycetes</taxon>
        <taxon>Kitasatosporales</taxon>
        <taxon>Streptomycetaceae</taxon>
        <taxon>Streptomyces</taxon>
        <taxon>Streptomyces albidoflavus group</taxon>
    </lineage>
</organism>
<name>SECE_STRCO</name>
<dbReference type="EMBL" id="D32254">
    <property type="protein sequence ID" value="BAA06984.1"/>
    <property type="molecule type" value="Genomic_DNA"/>
</dbReference>
<dbReference type="EMBL" id="AL939120">
    <property type="protein sequence ID" value="CAB77420.1"/>
    <property type="molecule type" value="Genomic_DNA"/>
</dbReference>
<dbReference type="PIR" id="S54716">
    <property type="entry name" value="S54716"/>
</dbReference>
<dbReference type="RefSeq" id="NP_628807.1">
    <property type="nucleotide sequence ID" value="NC_003888.3"/>
</dbReference>
<dbReference type="RefSeq" id="WP_003974317.1">
    <property type="nucleotide sequence ID" value="NZ_VNID01000028.1"/>
</dbReference>
<dbReference type="SMR" id="P0A4G8"/>
<dbReference type="STRING" id="100226.gene:17762295"/>
<dbReference type="PaxDb" id="100226-SCO4646"/>
<dbReference type="GeneID" id="96656001"/>
<dbReference type="KEGG" id="sco:SCO4646"/>
<dbReference type="PATRIC" id="fig|100226.15.peg.4717"/>
<dbReference type="eggNOG" id="COG0690">
    <property type="taxonomic scope" value="Bacteria"/>
</dbReference>
<dbReference type="HOGENOM" id="CLU_113663_3_0_11"/>
<dbReference type="InParanoid" id="P0A4G8"/>
<dbReference type="Proteomes" id="UP000001973">
    <property type="component" value="Chromosome"/>
</dbReference>
<dbReference type="GO" id="GO:0005886">
    <property type="term" value="C:plasma membrane"/>
    <property type="evidence" value="ECO:0000318"/>
    <property type="project" value="GO_Central"/>
</dbReference>
<dbReference type="GO" id="GO:0008320">
    <property type="term" value="F:protein transmembrane transporter activity"/>
    <property type="evidence" value="ECO:0000318"/>
    <property type="project" value="GO_Central"/>
</dbReference>
<dbReference type="GO" id="GO:0065002">
    <property type="term" value="P:intracellular protein transmembrane transport"/>
    <property type="evidence" value="ECO:0007669"/>
    <property type="project" value="UniProtKB-UniRule"/>
</dbReference>
<dbReference type="GO" id="GO:0009306">
    <property type="term" value="P:protein secretion"/>
    <property type="evidence" value="ECO:0007669"/>
    <property type="project" value="UniProtKB-UniRule"/>
</dbReference>
<dbReference type="GO" id="GO:0006605">
    <property type="term" value="P:protein targeting"/>
    <property type="evidence" value="ECO:0007669"/>
    <property type="project" value="UniProtKB-UniRule"/>
</dbReference>
<dbReference type="GO" id="GO:0043952">
    <property type="term" value="P:protein transport by the Sec complex"/>
    <property type="evidence" value="ECO:0000318"/>
    <property type="project" value="GO_Central"/>
</dbReference>
<dbReference type="Gene3D" id="1.20.5.1030">
    <property type="entry name" value="Preprotein translocase secy subunit"/>
    <property type="match status" value="1"/>
</dbReference>
<dbReference type="HAMAP" id="MF_00422">
    <property type="entry name" value="SecE"/>
    <property type="match status" value="1"/>
</dbReference>
<dbReference type="InterPro" id="IPR005807">
    <property type="entry name" value="SecE_bac"/>
</dbReference>
<dbReference type="InterPro" id="IPR038379">
    <property type="entry name" value="SecE_sf"/>
</dbReference>
<dbReference type="InterPro" id="IPR001901">
    <property type="entry name" value="Translocase_SecE/Sec61-g"/>
</dbReference>
<dbReference type="NCBIfam" id="TIGR00964">
    <property type="entry name" value="secE_bact"/>
    <property type="match status" value="1"/>
</dbReference>
<dbReference type="PANTHER" id="PTHR33910">
    <property type="entry name" value="PROTEIN TRANSLOCASE SUBUNIT SECE"/>
    <property type="match status" value="1"/>
</dbReference>
<dbReference type="PANTHER" id="PTHR33910:SF1">
    <property type="entry name" value="PROTEIN TRANSLOCASE SUBUNIT SECE"/>
    <property type="match status" value="1"/>
</dbReference>
<dbReference type="Pfam" id="PF00584">
    <property type="entry name" value="SecE"/>
    <property type="match status" value="1"/>
</dbReference>
<dbReference type="PROSITE" id="PS01067">
    <property type="entry name" value="SECE_SEC61G"/>
    <property type="match status" value="1"/>
</dbReference>
<reference key="1">
    <citation type="journal article" date="1995" name="Mol. Gen. Genet.">
        <title>Cloning, nucleotide sequence, and transcriptional analysis of the nusG gene of Streptomyces coelicolor A3(2), which encodes a putative transcriptional antiterminator.</title>
        <authorList>
            <person name="Puttikhunt C."/>
            <person name="Nihira T."/>
            <person name="Yamada Y."/>
        </authorList>
    </citation>
    <scope>NUCLEOTIDE SEQUENCE [GENOMIC DNA]</scope>
    <source>
        <strain>A3(2) / NRRL B-16638</strain>
    </source>
</reference>
<reference key="2">
    <citation type="journal article" date="2002" name="Nature">
        <title>Complete genome sequence of the model actinomycete Streptomyces coelicolor A3(2).</title>
        <authorList>
            <person name="Bentley S.D."/>
            <person name="Chater K.F."/>
            <person name="Cerdeno-Tarraga A.-M."/>
            <person name="Challis G.L."/>
            <person name="Thomson N.R."/>
            <person name="James K.D."/>
            <person name="Harris D.E."/>
            <person name="Quail M.A."/>
            <person name="Kieser H."/>
            <person name="Harper D."/>
            <person name="Bateman A."/>
            <person name="Brown S."/>
            <person name="Chandra G."/>
            <person name="Chen C.W."/>
            <person name="Collins M."/>
            <person name="Cronin A."/>
            <person name="Fraser A."/>
            <person name="Goble A."/>
            <person name="Hidalgo J."/>
            <person name="Hornsby T."/>
            <person name="Howarth S."/>
            <person name="Huang C.-H."/>
            <person name="Kieser T."/>
            <person name="Larke L."/>
            <person name="Murphy L.D."/>
            <person name="Oliver K."/>
            <person name="O'Neil S."/>
            <person name="Rabbinowitsch E."/>
            <person name="Rajandream M.A."/>
            <person name="Rutherford K.M."/>
            <person name="Rutter S."/>
            <person name="Seeger K."/>
            <person name="Saunders D."/>
            <person name="Sharp S."/>
            <person name="Squares R."/>
            <person name="Squares S."/>
            <person name="Taylor K."/>
            <person name="Warren T."/>
            <person name="Wietzorrek A."/>
            <person name="Woodward J.R."/>
            <person name="Barrell B.G."/>
            <person name="Parkhill J."/>
            <person name="Hopwood D.A."/>
        </authorList>
    </citation>
    <scope>NUCLEOTIDE SEQUENCE [LARGE SCALE GENOMIC DNA]</scope>
    <source>
        <strain>ATCC BAA-471 / A3(2) / M145</strain>
    </source>
</reference>
<comment type="function">
    <text evidence="1">Essential subunit of the Sec protein translocation channel SecYEG. Clamps together the 2 halves of SecY. May contact the channel plug during translocation.</text>
</comment>
<comment type="subunit">
    <text evidence="1">Component of the Sec protein translocase complex. Heterotrimer consisting of SecY, SecE and SecG subunits. The heterotrimers can form oligomers, although 1 heterotrimer is thought to be able to translocate proteins. Interacts with the ribosome. Interacts with SecDF, and other proteins may be involved. Interacts with SecA.</text>
</comment>
<comment type="subcellular location">
    <subcellularLocation>
        <location evidence="1">Cell membrane</location>
        <topology evidence="1">Single-pass membrane protein</topology>
    </subcellularLocation>
</comment>
<comment type="similarity">
    <text evidence="1">Belongs to the SecE/SEC61-gamma family.</text>
</comment>
<evidence type="ECO:0000255" key="1">
    <source>
        <dbReference type="HAMAP-Rule" id="MF_00422"/>
    </source>
</evidence>
<evidence type="ECO:0000256" key="2">
    <source>
        <dbReference type="SAM" id="MobiDB-lite"/>
    </source>
</evidence>
<evidence type="ECO:0000305" key="3"/>